<keyword id="KW-1185">Reference proteome</keyword>
<reference key="1">
    <citation type="journal article" date="2001" name="Virology">
        <title>Analysis of the first complete DNA sequence of an invertebrate iridovirus: coding strategy of the genome of Chilo iridescent virus.</title>
        <authorList>
            <person name="Jakob N.J."/>
            <person name="Mueller K."/>
            <person name="Bahr U."/>
            <person name="Darai G."/>
        </authorList>
    </citation>
    <scope>NUCLEOTIDE SEQUENCE [LARGE SCALE GENOMIC DNA]</scope>
</reference>
<reference key="2">
    <citation type="journal article" date="2007" name="Virol. J.">
        <title>Comparative genomic analysis of the family Iridoviridae: re-annotating and defining the core set of iridovirus genes.</title>
        <authorList>
            <person name="Eaton H.E."/>
            <person name="Metcalf J."/>
            <person name="Penny E."/>
            <person name="Tcherepanov V."/>
            <person name="Upton C."/>
            <person name="Brunetti C.R."/>
        </authorList>
    </citation>
    <scope>GENOME REANNOTATION</scope>
</reference>
<feature type="chain" id="PRO_0000377869" description="Uncharacterized protein 359L">
    <location>
        <begin position="1"/>
        <end position="346"/>
    </location>
</feature>
<proteinExistence type="inferred from homology"/>
<gene>
    <name type="ORF">IIV6-359L</name>
</gene>
<evidence type="ECO:0000305" key="1"/>
<organism>
    <name type="scientific">Invertebrate iridescent virus 6</name>
    <name type="common">IIV-6</name>
    <name type="synonym">Chilo iridescent virus</name>
    <dbReference type="NCBI Taxonomy" id="176652"/>
    <lineage>
        <taxon>Viruses</taxon>
        <taxon>Varidnaviria</taxon>
        <taxon>Bamfordvirae</taxon>
        <taxon>Nucleocytoviricota</taxon>
        <taxon>Megaviricetes</taxon>
        <taxon>Pimascovirales</taxon>
        <taxon>Iridoviridae</taxon>
        <taxon>Betairidovirinae</taxon>
        <taxon>Iridovirus</taxon>
    </lineage>
</organism>
<dbReference type="EMBL" id="AF303741">
    <property type="protein sequence ID" value="AAK82219.1"/>
    <property type="molecule type" value="Genomic_DNA"/>
</dbReference>
<dbReference type="RefSeq" id="NP_149822.1">
    <property type="nucleotide sequence ID" value="NC_003038.1"/>
</dbReference>
<dbReference type="SMR" id="Q91FG5"/>
<dbReference type="KEGG" id="vg:1733093"/>
<dbReference type="OrthoDB" id="33856at10239"/>
<dbReference type="Proteomes" id="UP000001359">
    <property type="component" value="Genome"/>
</dbReference>
<comment type="similarity">
    <text evidence="1">Belongs to the IIV-6 359L family.</text>
</comment>
<protein>
    <recommendedName>
        <fullName>Uncharacterized protein 359L</fullName>
    </recommendedName>
</protein>
<sequence>MDDLIHSLKLIQIEKESILHRSESLDSSSTYTSSDTLSSREVSPISFLNETPSSFSLLSGFPRTSRENSVFKFPTTVVSLPENAESQQKACVHRIIEDSGYFFCDFCGKEFTGNISYEKTWDPTYASARVQRVKVEEGVRVNFFSIKEDLKFMGLNEDILFNIFEAYKKVTENGTKIHRSKLRKSILCACVKYIFDIRQIPCDENDLIRQFEIDKKDYSKGFKQLKMKVPETRSCQDDVLISLRNLFRKLDIDKQFFKTIECIYKTVKHTTLIKTNETFDEGPVFKDKNAKTIAAIVIYYWLENQQSNVIDINNFSVECLIPKYSLHKAYKECCPLISQIISFPLI</sequence>
<organismHost>
    <name type="scientific">Acheta domesticus</name>
    <name type="common">House cricket</name>
    <dbReference type="NCBI Taxonomy" id="6997"/>
</organismHost>
<organismHost>
    <name type="scientific">Chilo suppressalis</name>
    <name type="common">Asiatic rice borer moth</name>
    <dbReference type="NCBI Taxonomy" id="168631"/>
</organismHost>
<organismHost>
    <name type="scientific">Gryllus bimaculatus</name>
    <name type="common">Two-spotted cricket</name>
    <dbReference type="NCBI Taxonomy" id="6999"/>
</organismHost>
<organismHost>
    <name type="scientific">Gryllus campestris</name>
    <dbReference type="NCBI Taxonomy" id="58607"/>
</organismHost>
<organismHost>
    <name type="scientific">Spodoptera frugiperda</name>
    <name type="common">Fall armyworm</name>
    <dbReference type="NCBI Taxonomy" id="7108"/>
</organismHost>
<name>VF359_IIV6</name>
<accession>Q91FG5</accession>